<dbReference type="EC" id="6.1.1.17" evidence="1"/>
<dbReference type="EMBL" id="CP000494">
    <property type="protein sequence ID" value="ABQ36533.1"/>
    <property type="molecule type" value="Genomic_DNA"/>
</dbReference>
<dbReference type="RefSeq" id="WP_012044529.1">
    <property type="nucleotide sequence ID" value="NC_009485.1"/>
</dbReference>
<dbReference type="SMR" id="A5EK39"/>
<dbReference type="STRING" id="288000.BBta_4501"/>
<dbReference type="KEGG" id="bbt:BBta_4501"/>
<dbReference type="eggNOG" id="COG0008">
    <property type="taxonomic scope" value="Bacteria"/>
</dbReference>
<dbReference type="HOGENOM" id="CLU_015768_6_0_5"/>
<dbReference type="OrthoDB" id="9807503at2"/>
<dbReference type="Proteomes" id="UP000000246">
    <property type="component" value="Chromosome"/>
</dbReference>
<dbReference type="GO" id="GO:0005829">
    <property type="term" value="C:cytosol"/>
    <property type="evidence" value="ECO:0007669"/>
    <property type="project" value="TreeGrafter"/>
</dbReference>
<dbReference type="GO" id="GO:0005524">
    <property type="term" value="F:ATP binding"/>
    <property type="evidence" value="ECO:0007669"/>
    <property type="project" value="UniProtKB-UniRule"/>
</dbReference>
<dbReference type="GO" id="GO:0004818">
    <property type="term" value="F:glutamate-tRNA ligase activity"/>
    <property type="evidence" value="ECO:0007669"/>
    <property type="project" value="UniProtKB-UniRule"/>
</dbReference>
<dbReference type="GO" id="GO:0000049">
    <property type="term" value="F:tRNA binding"/>
    <property type="evidence" value="ECO:0007669"/>
    <property type="project" value="InterPro"/>
</dbReference>
<dbReference type="GO" id="GO:0008270">
    <property type="term" value="F:zinc ion binding"/>
    <property type="evidence" value="ECO:0007669"/>
    <property type="project" value="InterPro"/>
</dbReference>
<dbReference type="GO" id="GO:0006424">
    <property type="term" value="P:glutamyl-tRNA aminoacylation"/>
    <property type="evidence" value="ECO:0007669"/>
    <property type="project" value="UniProtKB-UniRule"/>
</dbReference>
<dbReference type="CDD" id="cd00808">
    <property type="entry name" value="GluRS_core"/>
    <property type="match status" value="1"/>
</dbReference>
<dbReference type="FunFam" id="3.40.50.620:FF:000007">
    <property type="entry name" value="Glutamate--tRNA ligase"/>
    <property type="match status" value="1"/>
</dbReference>
<dbReference type="Gene3D" id="1.10.10.350">
    <property type="match status" value="1"/>
</dbReference>
<dbReference type="Gene3D" id="3.40.50.620">
    <property type="entry name" value="HUPs"/>
    <property type="match status" value="1"/>
</dbReference>
<dbReference type="HAMAP" id="MF_00022">
    <property type="entry name" value="Glu_tRNA_synth_type1"/>
    <property type="match status" value="1"/>
</dbReference>
<dbReference type="InterPro" id="IPR045462">
    <property type="entry name" value="aa-tRNA-synth_I_cd-bd"/>
</dbReference>
<dbReference type="InterPro" id="IPR020751">
    <property type="entry name" value="aa-tRNA-synth_I_codon-bd_sub2"/>
</dbReference>
<dbReference type="InterPro" id="IPR001412">
    <property type="entry name" value="aa-tRNA-synth_I_CS"/>
</dbReference>
<dbReference type="InterPro" id="IPR008925">
    <property type="entry name" value="aa_tRNA-synth_I_cd-bd_sf"/>
</dbReference>
<dbReference type="InterPro" id="IPR004527">
    <property type="entry name" value="Glu-tRNA-ligase_bac/mito"/>
</dbReference>
<dbReference type="InterPro" id="IPR000924">
    <property type="entry name" value="Glu/Gln-tRNA-synth"/>
</dbReference>
<dbReference type="InterPro" id="IPR020058">
    <property type="entry name" value="Glu/Gln-tRNA-synth_Ib_cat-dom"/>
</dbReference>
<dbReference type="InterPro" id="IPR049940">
    <property type="entry name" value="GluQ/Sye"/>
</dbReference>
<dbReference type="InterPro" id="IPR033910">
    <property type="entry name" value="GluRS_core"/>
</dbReference>
<dbReference type="InterPro" id="IPR014729">
    <property type="entry name" value="Rossmann-like_a/b/a_fold"/>
</dbReference>
<dbReference type="NCBIfam" id="TIGR00464">
    <property type="entry name" value="gltX_bact"/>
    <property type="match status" value="1"/>
</dbReference>
<dbReference type="PANTHER" id="PTHR43311">
    <property type="entry name" value="GLUTAMATE--TRNA LIGASE"/>
    <property type="match status" value="1"/>
</dbReference>
<dbReference type="PANTHER" id="PTHR43311:SF2">
    <property type="entry name" value="GLUTAMATE--TRNA LIGASE, MITOCHONDRIAL-RELATED"/>
    <property type="match status" value="1"/>
</dbReference>
<dbReference type="Pfam" id="PF19269">
    <property type="entry name" value="Anticodon_2"/>
    <property type="match status" value="1"/>
</dbReference>
<dbReference type="Pfam" id="PF00749">
    <property type="entry name" value="tRNA-synt_1c"/>
    <property type="match status" value="1"/>
</dbReference>
<dbReference type="PRINTS" id="PR00987">
    <property type="entry name" value="TRNASYNTHGLU"/>
</dbReference>
<dbReference type="SUPFAM" id="SSF48163">
    <property type="entry name" value="An anticodon-binding domain of class I aminoacyl-tRNA synthetases"/>
    <property type="match status" value="1"/>
</dbReference>
<dbReference type="SUPFAM" id="SSF52374">
    <property type="entry name" value="Nucleotidylyl transferase"/>
    <property type="match status" value="1"/>
</dbReference>
<dbReference type="PROSITE" id="PS00178">
    <property type="entry name" value="AA_TRNA_LIGASE_I"/>
    <property type="match status" value="1"/>
</dbReference>
<keyword id="KW-0030">Aminoacyl-tRNA synthetase</keyword>
<keyword id="KW-0067">ATP-binding</keyword>
<keyword id="KW-0963">Cytoplasm</keyword>
<keyword id="KW-0436">Ligase</keyword>
<keyword id="KW-0547">Nucleotide-binding</keyword>
<keyword id="KW-0648">Protein biosynthesis</keyword>
<keyword id="KW-1185">Reference proteome</keyword>
<comment type="function">
    <text evidence="1">Catalyzes the attachment of glutamate to tRNA(Glu) in a two-step reaction: glutamate is first activated by ATP to form Glu-AMP and then transferred to the acceptor end of tRNA(Glu).</text>
</comment>
<comment type="catalytic activity">
    <reaction evidence="1">
        <text>tRNA(Glu) + L-glutamate + ATP = L-glutamyl-tRNA(Glu) + AMP + diphosphate</text>
        <dbReference type="Rhea" id="RHEA:23540"/>
        <dbReference type="Rhea" id="RHEA-COMP:9663"/>
        <dbReference type="Rhea" id="RHEA-COMP:9680"/>
        <dbReference type="ChEBI" id="CHEBI:29985"/>
        <dbReference type="ChEBI" id="CHEBI:30616"/>
        <dbReference type="ChEBI" id="CHEBI:33019"/>
        <dbReference type="ChEBI" id="CHEBI:78442"/>
        <dbReference type="ChEBI" id="CHEBI:78520"/>
        <dbReference type="ChEBI" id="CHEBI:456215"/>
        <dbReference type="EC" id="6.1.1.17"/>
    </reaction>
</comment>
<comment type="subunit">
    <text evidence="1">Monomer.</text>
</comment>
<comment type="subcellular location">
    <subcellularLocation>
        <location evidence="1">Cytoplasm</location>
    </subcellularLocation>
</comment>
<comment type="similarity">
    <text evidence="1">Belongs to the class-I aminoacyl-tRNA synthetase family. Glutamate--tRNA ligase type 1 subfamily.</text>
</comment>
<accession>A5EK39</accession>
<feature type="chain" id="PRO_1000001876" description="Glutamate--tRNA ligase">
    <location>
        <begin position="1"/>
        <end position="474"/>
    </location>
</feature>
<feature type="short sequence motif" description="'HIGH' region" evidence="1">
    <location>
        <begin position="11"/>
        <end position="21"/>
    </location>
</feature>
<feature type="short sequence motif" description="'KMSKS' region" evidence="1">
    <location>
        <begin position="240"/>
        <end position="244"/>
    </location>
</feature>
<feature type="binding site" evidence="1">
    <location>
        <position position="243"/>
    </location>
    <ligand>
        <name>ATP</name>
        <dbReference type="ChEBI" id="CHEBI:30616"/>
    </ligand>
</feature>
<name>SYE_BRASB</name>
<organism>
    <name type="scientific">Bradyrhizobium sp. (strain BTAi1 / ATCC BAA-1182)</name>
    <dbReference type="NCBI Taxonomy" id="288000"/>
    <lineage>
        <taxon>Bacteria</taxon>
        <taxon>Pseudomonadati</taxon>
        <taxon>Pseudomonadota</taxon>
        <taxon>Alphaproteobacteria</taxon>
        <taxon>Hyphomicrobiales</taxon>
        <taxon>Nitrobacteraceae</taxon>
        <taxon>Bradyrhizobium</taxon>
    </lineage>
</organism>
<gene>
    <name evidence="1" type="primary">gltX</name>
    <name type="ordered locus">BBta_4501</name>
</gene>
<reference key="1">
    <citation type="journal article" date="2007" name="Science">
        <title>Legumes symbioses: absence of nod genes in photosynthetic bradyrhizobia.</title>
        <authorList>
            <person name="Giraud E."/>
            <person name="Moulin L."/>
            <person name="Vallenet D."/>
            <person name="Barbe V."/>
            <person name="Cytryn E."/>
            <person name="Avarre J.-C."/>
            <person name="Jaubert M."/>
            <person name="Simon D."/>
            <person name="Cartieaux F."/>
            <person name="Prin Y."/>
            <person name="Bena G."/>
            <person name="Hannibal L."/>
            <person name="Fardoux J."/>
            <person name="Kojadinovic M."/>
            <person name="Vuillet L."/>
            <person name="Lajus A."/>
            <person name="Cruveiller S."/>
            <person name="Rouy Z."/>
            <person name="Mangenot S."/>
            <person name="Segurens B."/>
            <person name="Dossat C."/>
            <person name="Franck W.L."/>
            <person name="Chang W.-S."/>
            <person name="Saunders E."/>
            <person name="Bruce D."/>
            <person name="Richardson P."/>
            <person name="Normand P."/>
            <person name="Dreyfus B."/>
            <person name="Pignol D."/>
            <person name="Stacey G."/>
            <person name="Emerich D."/>
            <person name="Vermeglio A."/>
            <person name="Medigue C."/>
            <person name="Sadowsky M."/>
        </authorList>
    </citation>
    <scope>NUCLEOTIDE SEQUENCE [LARGE SCALE GENOMIC DNA]</scope>
    <source>
        <strain>BTAi1 / ATCC BAA-1182</strain>
    </source>
</reference>
<proteinExistence type="inferred from homology"/>
<protein>
    <recommendedName>
        <fullName evidence="1">Glutamate--tRNA ligase</fullName>
        <ecNumber evidence="1">6.1.1.17</ecNumber>
    </recommendedName>
    <alternativeName>
        <fullName evidence="1">Glutamyl-tRNA synthetase</fullName>
        <shortName evidence="1">GluRS</shortName>
    </alternativeName>
</protein>
<sequence>MTSPIVTRFAPSPTGFLHIGGARTALFNWLYARGRCGKMLLRIEDTDRERSTTAAIDAILDGLKWLELDWDGEVIYQYSRAARHREVAEQLLASGMAYRCYATAEELAAMREKARAEGRTRLYDGMWRDRDPKDAPGDVKPTIRLRAPLTGETVIEDQVQGRVVWQNENLDDLVLLRGDGNPTYMLAVVVDDHDMGVTHVIRGDDHLINAARQKQIYDALGWTVPSMSHIPLIHGPDGSKLSKRHGALGVDAYRAMGYLPSALRNYLVRLGWSHGDQEIFSTEEMIKAFDLPAIGRSAARFDFAKLENLNGHYIRHSDDAALVRQFEDVLNYVPNGATLKAKLNDATRAQLTQAMPSLKERAKTLLELIDGAAFLFADRPLPIDAKAAALLTPDSRALIGRLHDALAAVEPWSGPATEAALRAFAETNNLKLGAVAQPLRAALTGRTTSPGIFDVLAILGRDESLGRLKDQTTS</sequence>
<evidence type="ECO:0000255" key="1">
    <source>
        <dbReference type="HAMAP-Rule" id="MF_00022"/>
    </source>
</evidence>